<accession>Q980C3</accession>
<keyword id="KW-0413">Isomerase</keyword>
<keyword id="KW-1185">Reference proteome</keyword>
<keyword id="KW-0819">tRNA processing</keyword>
<organism>
    <name type="scientific">Saccharolobus solfataricus (strain ATCC 35092 / DSM 1617 / JCM 11322 / P2)</name>
    <name type="common">Sulfolobus solfataricus</name>
    <dbReference type="NCBI Taxonomy" id="273057"/>
    <lineage>
        <taxon>Archaea</taxon>
        <taxon>Thermoproteota</taxon>
        <taxon>Thermoprotei</taxon>
        <taxon>Sulfolobales</taxon>
        <taxon>Sulfolobaceae</taxon>
        <taxon>Saccharolobus</taxon>
    </lineage>
</organism>
<evidence type="ECO:0000250" key="1"/>
<evidence type="ECO:0000255" key="2">
    <source>
        <dbReference type="PROSITE-ProRule" id="PRU00161"/>
    </source>
</evidence>
<evidence type="ECO:0000305" key="3"/>
<protein>
    <recommendedName>
        <fullName>Probable tRNA pseudouridine synthase B</fullName>
        <ecNumber>5.4.99.25</ecNumber>
    </recommendedName>
    <alternativeName>
        <fullName>tRNA pseudouridine(55) synthase</fullName>
        <shortName>Psi55 synthase</shortName>
    </alternativeName>
    <alternativeName>
        <fullName>tRNA pseudouridylate synthase</fullName>
    </alternativeName>
    <alternativeName>
        <fullName>tRNA-uridine isomerase</fullName>
    </alternativeName>
</protein>
<name>TRUB_SACS2</name>
<proteinExistence type="inferred from homology"/>
<reference key="1">
    <citation type="journal article" date="2001" name="Proc. Natl. Acad. Sci. U.S.A.">
        <title>The complete genome of the crenarchaeon Sulfolobus solfataricus P2.</title>
        <authorList>
            <person name="She Q."/>
            <person name="Singh R.K."/>
            <person name="Confalonieri F."/>
            <person name="Zivanovic Y."/>
            <person name="Allard G."/>
            <person name="Awayez M.J."/>
            <person name="Chan-Weiher C.C.-Y."/>
            <person name="Clausen I.G."/>
            <person name="Curtis B.A."/>
            <person name="De Moors A."/>
            <person name="Erauso G."/>
            <person name="Fletcher C."/>
            <person name="Gordon P.M.K."/>
            <person name="Heikamp-de Jong I."/>
            <person name="Jeffries A.C."/>
            <person name="Kozera C.J."/>
            <person name="Medina N."/>
            <person name="Peng X."/>
            <person name="Thi-Ngoc H.P."/>
            <person name="Redder P."/>
            <person name="Schenk M.E."/>
            <person name="Theriault C."/>
            <person name="Tolstrup N."/>
            <person name="Charlebois R.L."/>
            <person name="Doolittle W.F."/>
            <person name="Duguet M."/>
            <person name="Gaasterland T."/>
            <person name="Garrett R.A."/>
            <person name="Ragan M.A."/>
            <person name="Sensen C.W."/>
            <person name="Van der Oost J."/>
        </authorList>
    </citation>
    <scope>NUCLEOTIDE SEQUENCE [LARGE SCALE GENOMIC DNA]</scope>
    <source>
        <strain>ATCC 35092 / DSM 1617 / JCM 11322 / P2</strain>
    </source>
</reference>
<feature type="chain" id="PRO_0000121971" description="Probable tRNA pseudouridine synthase B">
    <location>
        <begin position="1"/>
        <end position="251"/>
    </location>
</feature>
<feature type="domain" description="PUA" evidence="2">
    <location>
        <begin position="163"/>
        <end position="237"/>
    </location>
</feature>
<gene>
    <name type="primary">truB</name>
    <name type="ordered locus">SSO0393</name>
</gene>
<sequence>MLPIGIENATKIMNYISKGGKEYVCVMQVHCEYNKEELAKIISSFKGEIYQRPPVRSSVKRRLRIRRIYDIEILDMDKKLVLLRVNCDSGTYMRKLCHDIGIIYGCGAHMRELRRTRSGIFTESTNLVKLHELSEAIYLYKNCKDETELRRVLIPMEFATCEIPKIVIEDSAVNALAYGAQLAVPGVVAYQNFKKNDTVAVLTLKGELVATGNALMDSEELENAKKGIVVNLSRVFMQRDIYPKAWKKHES</sequence>
<comment type="function">
    <text evidence="1">Could be responsible for synthesis of pseudouridine from uracil-55 in the psi GC loop of transfer RNAs.</text>
</comment>
<comment type="catalytic activity">
    <reaction>
        <text>uridine(55) in tRNA = pseudouridine(55) in tRNA</text>
        <dbReference type="Rhea" id="RHEA:42532"/>
        <dbReference type="Rhea" id="RHEA-COMP:10101"/>
        <dbReference type="Rhea" id="RHEA-COMP:10102"/>
        <dbReference type="ChEBI" id="CHEBI:65314"/>
        <dbReference type="ChEBI" id="CHEBI:65315"/>
        <dbReference type="EC" id="5.4.99.25"/>
    </reaction>
</comment>
<comment type="similarity">
    <text evidence="3">Belongs to the pseudouridine synthase TruB family. Type 2 subfamily.</text>
</comment>
<dbReference type="EC" id="5.4.99.25"/>
<dbReference type="EMBL" id="AE006641">
    <property type="protein sequence ID" value="AAK40720.1"/>
    <property type="molecule type" value="Genomic_DNA"/>
</dbReference>
<dbReference type="PIR" id="A99183">
    <property type="entry name" value="A99183"/>
</dbReference>
<dbReference type="RefSeq" id="WP_009988804.1">
    <property type="nucleotide sequence ID" value="NC_002754.1"/>
</dbReference>
<dbReference type="SMR" id="Q980C3"/>
<dbReference type="FunCoup" id="Q980C3">
    <property type="interactions" value="156"/>
</dbReference>
<dbReference type="STRING" id="273057.SSO0393"/>
<dbReference type="PaxDb" id="273057-SSO0393"/>
<dbReference type="EnsemblBacteria" id="AAK40720">
    <property type="protein sequence ID" value="AAK40720"/>
    <property type="gene ID" value="SSO0393"/>
</dbReference>
<dbReference type="KEGG" id="sso:SSO0393"/>
<dbReference type="PATRIC" id="fig|273057.12.peg.387"/>
<dbReference type="eggNOG" id="arCOG00987">
    <property type="taxonomic scope" value="Archaea"/>
</dbReference>
<dbReference type="HOGENOM" id="CLU_032087_3_0_2"/>
<dbReference type="InParanoid" id="Q980C3"/>
<dbReference type="PhylomeDB" id="Q980C3"/>
<dbReference type="Proteomes" id="UP000001974">
    <property type="component" value="Chromosome"/>
</dbReference>
<dbReference type="GO" id="GO:0009982">
    <property type="term" value="F:pseudouridine synthase activity"/>
    <property type="evidence" value="ECO:0000318"/>
    <property type="project" value="GO_Central"/>
</dbReference>
<dbReference type="GO" id="GO:0003723">
    <property type="term" value="F:RNA binding"/>
    <property type="evidence" value="ECO:0007669"/>
    <property type="project" value="InterPro"/>
</dbReference>
<dbReference type="GO" id="GO:0160148">
    <property type="term" value="F:tRNA pseudouridine(55) synthase activity"/>
    <property type="evidence" value="ECO:0007669"/>
    <property type="project" value="UniProtKB-EC"/>
</dbReference>
<dbReference type="GO" id="GO:0000495">
    <property type="term" value="P:box H/ACA sno(s)RNA 3'-end processing"/>
    <property type="evidence" value="ECO:0000318"/>
    <property type="project" value="GO_Central"/>
</dbReference>
<dbReference type="GO" id="GO:1990481">
    <property type="term" value="P:mRNA pseudouridine synthesis"/>
    <property type="evidence" value="ECO:0000318"/>
    <property type="project" value="GO_Central"/>
</dbReference>
<dbReference type="GO" id="GO:0031118">
    <property type="term" value="P:rRNA pseudouridine synthesis"/>
    <property type="evidence" value="ECO:0000318"/>
    <property type="project" value="GO_Central"/>
</dbReference>
<dbReference type="GO" id="GO:0031120">
    <property type="term" value="P:snRNA pseudouridine synthesis"/>
    <property type="evidence" value="ECO:0000318"/>
    <property type="project" value="GO_Central"/>
</dbReference>
<dbReference type="GO" id="GO:0008033">
    <property type="term" value="P:tRNA processing"/>
    <property type="evidence" value="ECO:0007669"/>
    <property type="project" value="UniProtKB-KW"/>
</dbReference>
<dbReference type="CDD" id="cd21148">
    <property type="entry name" value="PUA_Cbf5"/>
    <property type="match status" value="1"/>
</dbReference>
<dbReference type="FunFam" id="3.30.2350.10:FF:000043">
    <property type="entry name" value="RNA-guided pseudouridylation complex pseudouridine synthase subunit Cbf5"/>
    <property type="match status" value="1"/>
</dbReference>
<dbReference type="Gene3D" id="3.30.2350.10">
    <property type="entry name" value="Pseudouridine synthase"/>
    <property type="match status" value="1"/>
</dbReference>
<dbReference type="Gene3D" id="2.30.130.10">
    <property type="entry name" value="PUA domain"/>
    <property type="match status" value="1"/>
</dbReference>
<dbReference type="InterPro" id="IPR020103">
    <property type="entry name" value="PsdUridine_synth_cat_dom_sf"/>
</dbReference>
<dbReference type="InterPro" id="IPR002501">
    <property type="entry name" value="PsdUridine_synth_N"/>
</dbReference>
<dbReference type="InterPro" id="IPR002478">
    <property type="entry name" value="PUA"/>
</dbReference>
<dbReference type="InterPro" id="IPR015947">
    <property type="entry name" value="PUA-like_sf"/>
</dbReference>
<dbReference type="InterPro" id="IPR036974">
    <property type="entry name" value="PUA_sf"/>
</dbReference>
<dbReference type="InterPro" id="IPR004802">
    <property type="entry name" value="tRNA_PsdUridine_synth_B_fam"/>
</dbReference>
<dbReference type="InterPro" id="IPR032819">
    <property type="entry name" value="TruB_C"/>
</dbReference>
<dbReference type="InterPro" id="IPR004521">
    <property type="entry name" value="Uncharacterised_CHP00451"/>
</dbReference>
<dbReference type="NCBIfam" id="TIGR00425">
    <property type="entry name" value="CBF5"/>
    <property type="match status" value="1"/>
</dbReference>
<dbReference type="NCBIfam" id="NF003280">
    <property type="entry name" value="PRK04270.1"/>
    <property type="match status" value="1"/>
</dbReference>
<dbReference type="NCBIfam" id="TIGR00451">
    <property type="entry name" value="unchar_dom_2"/>
    <property type="match status" value="1"/>
</dbReference>
<dbReference type="PANTHER" id="PTHR23127">
    <property type="entry name" value="CENTROMERE/MICROTUBULE BINDING PROTEIN CBF5"/>
    <property type="match status" value="1"/>
</dbReference>
<dbReference type="PANTHER" id="PTHR23127:SF0">
    <property type="entry name" value="H_ACA RIBONUCLEOPROTEIN COMPLEX SUBUNIT DKC1"/>
    <property type="match status" value="1"/>
</dbReference>
<dbReference type="Pfam" id="PF01472">
    <property type="entry name" value="PUA"/>
    <property type="match status" value="1"/>
</dbReference>
<dbReference type="Pfam" id="PF16198">
    <property type="entry name" value="TruB_C_2"/>
    <property type="match status" value="1"/>
</dbReference>
<dbReference type="Pfam" id="PF01509">
    <property type="entry name" value="TruB_N"/>
    <property type="match status" value="1"/>
</dbReference>
<dbReference type="SMART" id="SM00359">
    <property type="entry name" value="PUA"/>
    <property type="match status" value="1"/>
</dbReference>
<dbReference type="SUPFAM" id="SSF55120">
    <property type="entry name" value="Pseudouridine synthase"/>
    <property type="match status" value="1"/>
</dbReference>
<dbReference type="SUPFAM" id="SSF88697">
    <property type="entry name" value="PUA domain-like"/>
    <property type="match status" value="1"/>
</dbReference>
<dbReference type="PROSITE" id="PS50890">
    <property type="entry name" value="PUA"/>
    <property type="match status" value="1"/>
</dbReference>